<proteinExistence type="inferred from homology"/>
<comment type="function">
    <text evidence="1">Accelerates the degradation of transcripts by removing pyrophosphate from the 5'-end of triphosphorylated RNA, leading to a more labile monophosphorylated state that can stimulate subsequent ribonuclease cleavage.</text>
</comment>
<comment type="cofactor">
    <cofactor evidence="1">
        <name>a divalent metal cation</name>
        <dbReference type="ChEBI" id="CHEBI:60240"/>
    </cofactor>
</comment>
<comment type="similarity">
    <text evidence="1">Belongs to the Nudix hydrolase family. RppH subfamily.</text>
</comment>
<reference key="1">
    <citation type="submission" date="2008-02" db="EMBL/GenBank/DDBJ databases">
        <title>Complete sequence of Haemophilus somnus 2336.</title>
        <authorList>
            <consortium name="US DOE Joint Genome Institute"/>
            <person name="Siddaramappa S."/>
            <person name="Duncan A.J."/>
            <person name="Challacombe J.F."/>
            <person name="Rainey D."/>
            <person name="Gillaspy A.F."/>
            <person name="Carson M."/>
            <person name="Gipson J."/>
            <person name="Gipson M."/>
            <person name="Bruce D."/>
            <person name="Detter J.C."/>
            <person name="Han C.S."/>
            <person name="Land M."/>
            <person name="Tapia R."/>
            <person name="Thompson L.S."/>
            <person name="Orvis J."/>
            <person name="Zaitshik J."/>
            <person name="Barnes G."/>
            <person name="Brettin T.S."/>
            <person name="Dyer D.W."/>
            <person name="Inzana T.J."/>
        </authorList>
    </citation>
    <scope>NUCLEOTIDE SEQUENCE [LARGE SCALE GENOMIC DNA]</scope>
    <source>
        <strain>2336</strain>
    </source>
</reference>
<accession>B0UWT4</accession>
<name>RPPH_HISS2</name>
<keyword id="KW-0378">Hydrolase</keyword>
<dbReference type="EC" id="3.6.1.-" evidence="1"/>
<dbReference type="EMBL" id="CP000947">
    <property type="protein sequence ID" value="ACA32027.1"/>
    <property type="molecule type" value="Genomic_DNA"/>
</dbReference>
<dbReference type="RefSeq" id="WP_011609768.1">
    <property type="nucleotide sequence ID" value="NC_010519.1"/>
</dbReference>
<dbReference type="SMR" id="B0UWT4"/>
<dbReference type="STRING" id="228400.HSM_0388"/>
<dbReference type="GeneID" id="31486668"/>
<dbReference type="KEGG" id="hsm:HSM_0388"/>
<dbReference type="HOGENOM" id="CLU_087195_3_2_6"/>
<dbReference type="GO" id="GO:0005737">
    <property type="term" value="C:cytoplasm"/>
    <property type="evidence" value="ECO:0007669"/>
    <property type="project" value="TreeGrafter"/>
</dbReference>
<dbReference type="GO" id="GO:0034353">
    <property type="term" value="F:mRNA 5'-diphosphatase activity"/>
    <property type="evidence" value="ECO:0007669"/>
    <property type="project" value="TreeGrafter"/>
</dbReference>
<dbReference type="GO" id="GO:0006402">
    <property type="term" value="P:mRNA catabolic process"/>
    <property type="evidence" value="ECO:0007669"/>
    <property type="project" value="TreeGrafter"/>
</dbReference>
<dbReference type="CDD" id="cd03671">
    <property type="entry name" value="NUDIX_Ap4A_hydrolase_plant_like"/>
    <property type="match status" value="1"/>
</dbReference>
<dbReference type="FunFam" id="3.90.79.10:FF:000001">
    <property type="entry name" value="RNA pyrophosphohydrolase"/>
    <property type="match status" value="1"/>
</dbReference>
<dbReference type="Gene3D" id="3.90.79.10">
    <property type="entry name" value="Nucleoside Triphosphate Pyrophosphohydrolase"/>
    <property type="match status" value="1"/>
</dbReference>
<dbReference type="HAMAP" id="MF_00298">
    <property type="entry name" value="Nudix_RppH"/>
    <property type="match status" value="1"/>
</dbReference>
<dbReference type="InterPro" id="IPR020476">
    <property type="entry name" value="Nudix_hydrolase"/>
</dbReference>
<dbReference type="InterPro" id="IPR015797">
    <property type="entry name" value="NUDIX_hydrolase-like_dom_sf"/>
</dbReference>
<dbReference type="InterPro" id="IPR020084">
    <property type="entry name" value="NUDIX_hydrolase_CS"/>
</dbReference>
<dbReference type="InterPro" id="IPR000086">
    <property type="entry name" value="NUDIX_hydrolase_dom"/>
</dbReference>
<dbReference type="InterPro" id="IPR022927">
    <property type="entry name" value="RppH"/>
</dbReference>
<dbReference type="NCBIfam" id="NF001934">
    <property type="entry name" value="PRK00714.1-1"/>
    <property type="match status" value="1"/>
</dbReference>
<dbReference type="NCBIfam" id="NF001937">
    <property type="entry name" value="PRK00714.1-4"/>
    <property type="match status" value="1"/>
</dbReference>
<dbReference type="NCBIfam" id="NF001938">
    <property type="entry name" value="PRK00714.1-5"/>
    <property type="match status" value="1"/>
</dbReference>
<dbReference type="PANTHER" id="PTHR23114">
    <property type="entry name" value="M7GPPPN-MRNA HYDROLASE"/>
    <property type="match status" value="1"/>
</dbReference>
<dbReference type="PANTHER" id="PTHR23114:SF17">
    <property type="entry name" value="M7GPPPN-MRNA HYDROLASE"/>
    <property type="match status" value="1"/>
</dbReference>
<dbReference type="Pfam" id="PF00293">
    <property type="entry name" value="NUDIX"/>
    <property type="match status" value="1"/>
</dbReference>
<dbReference type="PRINTS" id="PR00502">
    <property type="entry name" value="NUDIXFAMILY"/>
</dbReference>
<dbReference type="SUPFAM" id="SSF55811">
    <property type="entry name" value="Nudix"/>
    <property type="match status" value="1"/>
</dbReference>
<dbReference type="PROSITE" id="PS51462">
    <property type="entry name" value="NUDIX"/>
    <property type="match status" value="1"/>
</dbReference>
<dbReference type="PROSITE" id="PS00893">
    <property type="entry name" value="NUDIX_BOX"/>
    <property type="match status" value="1"/>
</dbReference>
<feature type="chain" id="PRO_1000078965" description="RNA pyrophosphohydrolase">
    <location>
        <begin position="1"/>
        <end position="192"/>
    </location>
</feature>
<feature type="domain" description="Nudix hydrolase" evidence="1">
    <location>
        <begin position="6"/>
        <end position="149"/>
    </location>
</feature>
<feature type="short sequence motif" description="Nudix box">
    <location>
        <begin position="38"/>
        <end position="59"/>
    </location>
</feature>
<gene>
    <name evidence="1" type="primary">rppH</name>
    <name evidence="1" type="synonym">nudH</name>
    <name type="ordered locus">HSM_0388</name>
</gene>
<evidence type="ECO:0000255" key="1">
    <source>
        <dbReference type="HAMAP-Rule" id="MF_00298"/>
    </source>
</evidence>
<protein>
    <recommendedName>
        <fullName evidence="1">RNA pyrophosphohydrolase</fullName>
        <ecNumber evidence="1">3.6.1.-</ecNumber>
    </recommendedName>
    <alternativeName>
        <fullName evidence="1">(Di)nucleoside polyphosphate hydrolase</fullName>
    </alternativeName>
</protein>
<sequence length="192" mass="23164">MIDFDGYRPNVGIVICNAERQVLWAKRYGQNSWQFPQGGINDNETAEQAMYRELYEEAGLTPKDVEILYVSKHWLRYKLPKRLLRHDNRPICIGQKQRWFLLQLVSDEKRINMQHTKSPEFDGWRWVSFWYPVRQVVTFKKDVYRKVMKEFALFLFDTNLKSRLSVPEEKKMFSSVKKKLIHKKNHKYSSNQ</sequence>
<organism>
    <name type="scientific">Histophilus somni (strain 2336)</name>
    <name type="common">Haemophilus somnus</name>
    <dbReference type="NCBI Taxonomy" id="228400"/>
    <lineage>
        <taxon>Bacteria</taxon>
        <taxon>Pseudomonadati</taxon>
        <taxon>Pseudomonadota</taxon>
        <taxon>Gammaproteobacteria</taxon>
        <taxon>Pasteurellales</taxon>
        <taxon>Pasteurellaceae</taxon>
        <taxon>Histophilus</taxon>
    </lineage>
</organism>